<proteinExistence type="inferred from homology"/>
<dbReference type="EC" id="6.1.1.23" evidence="1"/>
<dbReference type="EMBL" id="CP000458">
    <property type="protein sequence ID" value="ABK09475.1"/>
    <property type="molecule type" value="Genomic_DNA"/>
</dbReference>
<dbReference type="RefSeq" id="WP_011546184.1">
    <property type="nucleotide sequence ID" value="NC_008542.1"/>
</dbReference>
<dbReference type="SMR" id="A0KAE8"/>
<dbReference type="KEGG" id="bch:Bcen2424_2725"/>
<dbReference type="HOGENOM" id="CLU_014330_3_2_4"/>
<dbReference type="GO" id="GO:0005737">
    <property type="term" value="C:cytoplasm"/>
    <property type="evidence" value="ECO:0007669"/>
    <property type="project" value="UniProtKB-SubCell"/>
</dbReference>
<dbReference type="GO" id="GO:0004815">
    <property type="term" value="F:aspartate-tRNA ligase activity"/>
    <property type="evidence" value="ECO:0007669"/>
    <property type="project" value="UniProtKB-UniRule"/>
</dbReference>
<dbReference type="GO" id="GO:0050560">
    <property type="term" value="F:aspartate-tRNA(Asn) ligase activity"/>
    <property type="evidence" value="ECO:0007669"/>
    <property type="project" value="UniProtKB-EC"/>
</dbReference>
<dbReference type="GO" id="GO:0005524">
    <property type="term" value="F:ATP binding"/>
    <property type="evidence" value="ECO:0007669"/>
    <property type="project" value="UniProtKB-UniRule"/>
</dbReference>
<dbReference type="GO" id="GO:0003676">
    <property type="term" value="F:nucleic acid binding"/>
    <property type="evidence" value="ECO:0007669"/>
    <property type="project" value="InterPro"/>
</dbReference>
<dbReference type="GO" id="GO:0006422">
    <property type="term" value="P:aspartyl-tRNA aminoacylation"/>
    <property type="evidence" value="ECO:0007669"/>
    <property type="project" value="UniProtKB-UniRule"/>
</dbReference>
<dbReference type="CDD" id="cd00777">
    <property type="entry name" value="AspRS_core"/>
    <property type="match status" value="1"/>
</dbReference>
<dbReference type="CDD" id="cd04317">
    <property type="entry name" value="EcAspRS_like_N"/>
    <property type="match status" value="1"/>
</dbReference>
<dbReference type="Gene3D" id="3.30.930.10">
    <property type="entry name" value="Bira Bifunctional Protein, Domain 2"/>
    <property type="match status" value="1"/>
</dbReference>
<dbReference type="Gene3D" id="3.30.1360.30">
    <property type="entry name" value="GAD-like domain"/>
    <property type="match status" value="1"/>
</dbReference>
<dbReference type="Gene3D" id="2.40.50.140">
    <property type="entry name" value="Nucleic acid-binding proteins"/>
    <property type="match status" value="1"/>
</dbReference>
<dbReference type="HAMAP" id="MF_00044">
    <property type="entry name" value="Asp_tRNA_synth_type1"/>
    <property type="match status" value="1"/>
</dbReference>
<dbReference type="InterPro" id="IPR004364">
    <property type="entry name" value="Aa-tRNA-synt_II"/>
</dbReference>
<dbReference type="InterPro" id="IPR006195">
    <property type="entry name" value="aa-tRNA-synth_II"/>
</dbReference>
<dbReference type="InterPro" id="IPR045864">
    <property type="entry name" value="aa-tRNA-synth_II/BPL/LPL"/>
</dbReference>
<dbReference type="InterPro" id="IPR004524">
    <property type="entry name" value="Asp-tRNA-ligase_1"/>
</dbReference>
<dbReference type="InterPro" id="IPR047089">
    <property type="entry name" value="Asp-tRNA-ligase_1_N"/>
</dbReference>
<dbReference type="InterPro" id="IPR002312">
    <property type="entry name" value="Asp/Asn-tRNA-synth_IIb"/>
</dbReference>
<dbReference type="InterPro" id="IPR047090">
    <property type="entry name" value="AspRS_core"/>
</dbReference>
<dbReference type="InterPro" id="IPR004115">
    <property type="entry name" value="GAD-like_sf"/>
</dbReference>
<dbReference type="InterPro" id="IPR029351">
    <property type="entry name" value="GAD_dom"/>
</dbReference>
<dbReference type="InterPro" id="IPR012340">
    <property type="entry name" value="NA-bd_OB-fold"/>
</dbReference>
<dbReference type="InterPro" id="IPR004365">
    <property type="entry name" value="NA-bd_OB_tRNA"/>
</dbReference>
<dbReference type="NCBIfam" id="TIGR00459">
    <property type="entry name" value="aspS_bact"/>
    <property type="match status" value="1"/>
</dbReference>
<dbReference type="NCBIfam" id="NF001750">
    <property type="entry name" value="PRK00476.1"/>
    <property type="match status" value="1"/>
</dbReference>
<dbReference type="PANTHER" id="PTHR22594:SF5">
    <property type="entry name" value="ASPARTATE--TRNA LIGASE, MITOCHONDRIAL"/>
    <property type="match status" value="1"/>
</dbReference>
<dbReference type="PANTHER" id="PTHR22594">
    <property type="entry name" value="ASPARTYL/LYSYL-TRNA SYNTHETASE"/>
    <property type="match status" value="1"/>
</dbReference>
<dbReference type="Pfam" id="PF02938">
    <property type="entry name" value="GAD"/>
    <property type="match status" value="1"/>
</dbReference>
<dbReference type="Pfam" id="PF00152">
    <property type="entry name" value="tRNA-synt_2"/>
    <property type="match status" value="1"/>
</dbReference>
<dbReference type="Pfam" id="PF01336">
    <property type="entry name" value="tRNA_anti-codon"/>
    <property type="match status" value="1"/>
</dbReference>
<dbReference type="PRINTS" id="PR01042">
    <property type="entry name" value="TRNASYNTHASP"/>
</dbReference>
<dbReference type="SUPFAM" id="SSF55681">
    <property type="entry name" value="Class II aaRS and biotin synthetases"/>
    <property type="match status" value="1"/>
</dbReference>
<dbReference type="SUPFAM" id="SSF55261">
    <property type="entry name" value="GAD domain-like"/>
    <property type="match status" value="1"/>
</dbReference>
<dbReference type="SUPFAM" id="SSF50249">
    <property type="entry name" value="Nucleic acid-binding proteins"/>
    <property type="match status" value="1"/>
</dbReference>
<dbReference type="PROSITE" id="PS50862">
    <property type="entry name" value="AA_TRNA_LIGASE_II"/>
    <property type="match status" value="1"/>
</dbReference>
<organism>
    <name type="scientific">Burkholderia cenocepacia (strain HI2424)</name>
    <dbReference type="NCBI Taxonomy" id="331272"/>
    <lineage>
        <taxon>Bacteria</taxon>
        <taxon>Pseudomonadati</taxon>
        <taxon>Pseudomonadota</taxon>
        <taxon>Betaproteobacteria</taxon>
        <taxon>Burkholderiales</taxon>
        <taxon>Burkholderiaceae</taxon>
        <taxon>Burkholderia</taxon>
        <taxon>Burkholderia cepacia complex</taxon>
    </lineage>
</organism>
<gene>
    <name evidence="1" type="primary">aspS</name>
    <name type="ordered locus">Bcen2424_2725</name>
</gene>
<sequence>MSMRTEYCGLVTEHLLGQTVSLCGWVQRRRDHGGVIFIDLRDREGLVQVVCDPDRAEMFATAEGVRNEFCVQIKGLVRNRPDGTVNAGLKSGRIEVLCHELNVLNASVTPPFQLDDDNLSETTRLTHRVLDLRRPQMQHNLRLRYRVAIEARKYLDEQGFIDIETPMLTKSTPEGARDYLVPSRVNAGQFFALPQSPQLFKQLLMVANFDRYYQITKCFRDEDLRADRQPEFTQIDCETSFLGEQEIRDLFEDMIRHIFKTTIDVELDAKFPVMPYSEAMARFGSDKPDLRVQLEFTELTDAMKDVDFKVFSTPANAKDGRVAALRVPKGGELSRGDIDGYTEFVRIYGAKGLAWIKVNEKAKGRDGLQSPIVKNLHDASIAAILERTGAEDGDIIFFAADRAKVVNDSLGALRLKIGHSEFGKANGLVQAGWKPLWVVDFPMFEYDDEDARYVAAHHPFTSPKDEHLEYLETDPGRCLAKAYDMVLNGWEIGGGSVRIHREEVQSKVFRALKIGAEEAQLKFGFLLDALQYGAPPHGGIAFGLDRIVTMMAGADSIRDVIAFPKTQRAQDLLTQAPSPVDERQLRELHIRLRQPEQPKA</sequence>
<protein>
    <recommendedName>
        <fullName evidence="1">Aspartate--tRNA(Asp/Asn) ligase</fullName>
        <ecNumber evidence="1">6.1.1.23</ecNumber>
    </recommendedName>
    <alternativeName>
        <fullName evidence="1">Aspartyl-tRNA synthetase</fullName>
        <shortName evidence="1">AspRS</shortName>
    </alternativeName>
    <alternativeName>
        <fullName evidence="1">Non-discriminating aspartyl-tRNA synthetase</fullName>
        <shortName evidence="1">ND-AspRS</shortName>
    </alternativeName>
</protein>
<comment type="function">
    <text evidence="1">Aspartyl-tRNA synthetase with relaxed tRNA specificity since it is able to aspartylate not only its cognate tRNA(Asp) but also tRNA(Asn). Reaction proceeds in two steps: L-aspartate is first activated by ATP to form Asp-AMP and then transferred to the acceptor end of tRNA(Asp/Asn).</text>
</comment>
<comment type="catalytic activity">
    <reaction evidence="1">
        <text>tRNA(Asx) + L-aspartate + ATP = L-aspartyl-tRNA(Asx) + AMP + diphosphate</text>
        <dbReference type="Rhea" id="RHEA:18349"/>
        <dbReference type="Rhea" id="RHEA-COMP:9710"/>
        <dbReference type="Rhea" id="RHEA-COMP:9711"/>
        <dbReference type="ChEBI" id="CHEBI:29991"/>
        <dbReference type="ChEBI" id="CHEBI:30616"/>
        <dbReference type="ChEBI" id="CHEBI:33019"/>
        <dbReference type="ChEBI" id="CHEBI:78442"/>
        <dbReference type="ChEBI" id="CHEBI:78516"/>
        <dbReference type="ChEBI" id="CHEBI:456215"/>
        <dbReference type="EC" id="6.1.1.23"/>
    </reaction>
</comment>
<comment type="subunit">
    <text evidence="1">Homodimer.</text>
</comment>
<comment type="subcellular location">
    <subcellularLocation>
        <location evidence="1">Cytoplasm</location>
    </subcellularLocation>
</comment>
<comment type="similarity">
    <text evidence="1">Belongs to the class-II aminoacyl-tRNA synthetase family. Type 1 subfamily.</text>
</comment>
<name>SYDND_BURCH</name>
<keyword id="KW-0030">Aminoacyl-tRNA synthetase</keyword>
<keyword id="KW-0067">ATP-binding</keyword>
<keyword id="KW-0963">Cytoplasm</keyword>
<keyword id="KW-0436">Ligase</keyword>
<keyword id="KW-0547">Nucleotide-binding</keyword>
<keyword id="KW-0648">Protein biosynthesis</keyword>
<evidence type="ECO:0000255" key="1">
    <source>
        <dbReference type="HAMAP-Rule" id="MF_00044"/>
    </source>
</evidence>
<reference key="1">
    <citation type="submission" date="2006-08" db="EMBL/GenBank/DDBJ databases">
        <title>Complete sequence of chromosome 1 of Burkholderia cenocepacia HI2424.</title>
        <authorList>
            <person name="Copeland A."/>
            <person name="Lucas S."/>
            <person name="Lapidus A."/>
            <person name="Barry K."/>
            <person name="Detter J.C."/>
            <person name="Glavina del Rio T."/>
            <person name="Hammon N."/>
            <person name="Israni S."/>
            <person name="Pitluck S."/>
            <person name="Chain P."/>
            <person name="Malfatti S."/>
            <person name="Shin M."/>
            <person name="Vergez L."/>
            <person name="Schmutz J."/>
            <person name="Larimer F."/>
            <person name="Land M."/>
            <person name="Hauser L."/>
            <person name="Kyrpides N."/>
            <person name="Kim E."/>
            <person name="LiPuma J.J."/>
            <person name="Gonzalez C.F."/>
            <person name="Konstantinidis K."/>
            <person name="Tiedje J.M."/>
            <person name="Richardson P."/>
        </authorList>
    </citation>
    <scope>NUCLEOTIDE SEQUENCE [LARGE SCALE GENOMIC DNA]</scope>
    <source>
        <strain>HI2424</strain>
    </source>
</reference>
<accession>A0KAE8</accession>
<feature type="chain" id="PRO_1000006645" description="Aspartate--tRNA(Asp/Asn) ligase">
    <location>
        <begin position="1"/>
        <end position="600"/>
    </location>
</feature>
<feature type="region of interest" description="Aspartate" evidence="1">
    <location>
        <begin position="198"/>
        <end position="201"/>
    </location>
</feature>
<feature type="binding site" evidence="1">
    <location>
        <position position="174"/>
    </location>
    <ligand>
        <name>L-aspartate</name>
        <dbReference type="ChEBI" id="CHEBI:29991"/>
    </ligand>
</feature>
<feature type="binding site" evidence="1">
    <location>
        <begin position="220"/>
        <end position="222"/>
    </location>
    <ligand>
        <name>ATP</name>
        <dbReference type="ChEBI" id="CHEBI:30616"/>
    </ligand>
</feature>
<feature type="binding site" evidence="1">
    <location>
        <position position="220"/>
    </location>
    <ligand>
        <name>L-aspartate</name>
        <dbReference type="ChEBI" id="CHEBI:29991"/>
    </ligand>
</feature>
<feature type="binding site" evidence="1">
    <location>
        <position position="229"/>
    </location>
    <ligand>
        <name>ATP</name>
        <dbReference type="ChEBI" id="CHEBI:30616"/>
    </ligand>
</feature>
<feature type="binding site" evidence="1">
    <location>
        <position position="457"/>
    </location>
    <ligand>
        <name>L-aspartate</name>
        <dbReference type="ChEBI" id="CHEBI:29991"/>
    </ligand>
</feature>
<feature type="binding site" evidence="1">
    <location>
        <position position="491"/>
    </location>
    <ligand>
        <name>ATP</name>
        <dbReference type="ChEBI" id="CHEBI:30616"/>
    </ligand>
</feature>
<feature type="binding site" evidence="1">
    <location>
        <position position="498"/>
    </location>
    <ligand>
        <name>L-aspartate</name>
        <dbReference type="ChEBI" id="CHEBI:29991"/>
    </ligand>
</feature>
<feature type="binding site" evidence="1">
    <location>
        <begin position="543"/>
        <end position="546"/>
    </location>
    <ligand>
        <name>ATP</name>
        <dbReference type="ChEBI" id="CHEBI:30616"/>
    </ligand>
</feature>
<feature type="site" description="Important for tRNA non-discrimination" evidence="1">
    <location>
        <position position="32"/>
    </location>
</feature>
<feature type="site" description="Important for tRNA non-discrimination" evidence="1">
    <location>
        <position position="83"/>
    </location>
</feature>